<accession>P78364</accession>
<accession>D3DUV4</accession>
<accession>Q8WVM3</accession>
<accession>Q9BU63</accession>
<name>PHC1_HUMAN</name>
<gene>
    <name type="primary">PHC1</name>
    <name type="synonym">EDR1</name>
    <name type="synonym">PH1</name>
</gene>
<feature type="chain" id="PRO_0000058375" description="Polyhomeotic-like protein 1">
    <location>
        <begin position="1"/>
        <end position="1004"/>
    </location>
</feature>
<feature type="domain" description="SAM" evidence="2">
    <location>
        <begin position="940"/>
        <end position="1004"/>
    </location>
</feature>
<feature type="zinc finger region" description="FCS-type" evidence="3">
    <location>
        <begin position="791"/>
        <end position="825"/>
    </location>
</feature>
<feature type="region of interest" description="Disordered" evidence="4">
    <location>
        <begin position="1"/>
        <end position="24"/>
    </location>
</feature>
<feature type="region of interest" description="Disordered" evidence="4">
    <location>
        <begin position="212"/>
        <end position="241"/>
    </location>
</feature>
<feature type="region of interest" description="Disordered" evidence="4">
    <location>
        <begin position="261"/>
        <end position="355"/>
    </location>
</feature>
<feature type="region of interest" description="Disordered" evidence="4">
    <location>
        <begin position="432"/>
        <end position="512"/>
    </location>
</feature>
<feature type="region of interest" description="Disordered" evidence="4">
    <location>
        <begin position="556"/>
        <end position="589"/>
    </location>
</feature>
<feature type="region of interest" description="Disordered" evidence="4">
    <location>
        <begin position="636"/>
        <end position="672"/>
    </location>
</feature>
<feature type="region of interest" description="Disordered" evidence="4">
    <location>
        <begin position="848"/>
        <end position="928"/>
    </location>
</feature>
<feature type="compositionally biased region" description="Low complexity" evidence="4">
    <location>
        <begin position="1"/>
        <end position="22"/>
    </location>
</feature>
<feature type="compositionally biased region" description="Polar residues" evidence="4">
    <location>
        <begin position="212"/>
        <end position="228"/>
    </location>
</feature>
<feature type="compositionally biased region" description="Gly residues" evidence="4">
    <location>
        <begin position="279"/>
        <end position="303"/>
    </location>
</feature>
<feature type="compositionally biased region" description="Polar residues" evidence="4">
    <location>
        <begin position="319"/>
        <end position="329"/>
    </location>
</feature>
<feature type="compositionally biased region" description="Polar residues" evidence="4">
    <location>
        <begin position="344"/>
        <end position="355"/>
    </location>
</feature>
<feature type="compositionally biased region" description="Low complexity" evidence="4">
    <location>
        <begin position="432"/>
        <end position="447"/>
    </location>
</feature>
<feature type="compositionally biased region" description="Pro residues" evidence="4">
    <location>
        <begin position="448"/>
        <end position="458"/>
    </location>
</feature>
<feature type="compositionally biased region" description="Low complexity" evidence="4">
    <location>
        <begin position="459"/>
        <end position="482"/>
    </location>
</feature>
<feature type="compositionally biased region" description="Pro residues" evidence="4">
    <location>
        <begin position="483"/>
        <end position="495"/>
    </location>
</feature>
<feature type="compositionally biased region" description="Low complexity" evidence="4">
    <location>
        <begin position="566"/>
        <end position="583"/>
    </location>
</feature>
<feature type="binding site" evidence="3">
    <location>
        <position position="800"/>
    </location>
    <ligand>
        <name>Zn(2+)</name>
        <dbReference type="ChEBI" id="CHEBI:29105"/>
    </ligand>
</feature>
<feature type="binding site" evidence="3">
    <location>
        <position position="803"/>
    </location>
    <ligand>
        <name>Zn(2+)</name>
        <dbReference type="ChEBI" id="CHEBI:29105"/>
    </ligand>
</feature>
<feature type="binding site" evidence="3">
    <location>
        <position position="819"/>
    </location>
    <ligand>
        <name>Zn(2+)</name>
        <dbReference type="ChEBI" id="CHEBI:29105"/>
    </ligand>
</feature>
<feature type="binding site" evidence="3">
    <location>
        <position position="823"/>
    </location>
    <ligand>
        <name>Zn(2+)</name>
        <dbReference type="ChEBI" id="CHEBI:29105"/>
    </ligand>
</feature>
<feature type="modified residue" description="Phosphoserine" evidence="14">
    <location>
        <position position="645"/>
    </location>
</feature>
<feature type="modified residue" description="Phosphoserine" evidence="13">
    <location>
        <position position="898"/>
    </location>
</feature>
<feature type="modified residue" description="Phosphothreonine" evidence="13">
    <location>
        <position position="922"/>
    </location>
</feature>
<feature type="cross-link" description="Glycyl lysine isopeptide (Lys-Gly) (interchain with G-Cter in SUMO2)" evidence="15">
    <location>
        <position position="763"/>
    </location>
</feature>
<feature type="sequence variant" id="VAR_054503" description="In dbSNP:rs1049925." evidence="6 11">
    <original>T</original>
    <variation>A</variation>
    <location>
        <position position="693"/>
    </location>
</feature>
<feature type="sequence variant" id="VAR_070566" description="In MCPH11; significant reduction in mutant protein levels which is shown to result from proteasome-mediated degradation; patient cells show increased expression of GMNN and decreased interaction between the protein and ubiquitinated H2AC17 compared to control cells; dbSNP:rs587777036." evidence="9">
    <original>L</original>
    <variation>F</variation>
    <location>
        <position position="992"/>
    </location>
</feature>
<feature type="sequence conflict" description="In Ref. 1; AAC51169." evidence="12" ref="1">
    <original>LGR</original>
    <variation>PGS</variation>
    <location>
        <begin position="165"/>
        <end position="167"/>
    </location>
</feature>
<feature type="sequence conflict" description="In Ref. 1; AAC51169." evidence="12" ref="1">
    <original>HL</original>
    <variation>LK</variation>
    <location>
        <begin position="568"/>
        <end position="569"/>
    </location>
</feature>
<feature type="sequence conflict" description="In Ref. 1; AAC51169." evidence="12" ref="1">
    <original>S</original>
    <variation>T</variation>
    <location>
        <position position="613"/>
    </location>
</feature>
<feature type="sequence conflict" description="In Ref. 1; AAC51169." evidence="12" ref="1">
    <original>V</original>
    <variation>G</variation>
    <location>
        <position position="752"/>
    </location>
</feature>
<feature type="sequence conflict" description="In Ref. 1; AAC51169." evidence="12" ref="1">
    <original>L</original>
    <variation>F</variation>
    <location>
        <position position="782"/>
    </location>
</feature>
<feature type="sequence conflict" description="In Ref. 1; AAC51169." evidence="12" ref="1">
    <original>L</original>
    <variation>F</variation>
    <location>
        <position position="972"/>
    </location>
</feature>
<feature type="strand" evidence="16">
    <location>
        <begin position="783"/>
        <end position="785"/>
    </location>
</feature>
<feature type="helix" evidence="16">
    <location>
        <begin position="789"/>
        <end position="794"/>
    </location>
</feature>
<feature type="strand" evidence="16">
    <location>
        <begin position="796"/>
        <end position="799"/>
    </location>
</feature>
<feature type="turn" evidence="16">
    <location>
        <begin position="801"/>
        <end position="803"/>
    </location>
</feature>
<feature type="strand" evidence="16">
    <location>
        <begin position="806"/>
        <end position="808"/>
    </location>
</feature>
<feature type="helix" evidence="16">
    <location>
        <begin position="809"/>
        <end position="811"/>
    </location>
</feature>
<feature type="turn" evidence="16">
    <location>
        <begin position="813"/>
        <end position="815"/>
    </location>
</feature>
<feature type="strand" evidence="16">
    <location>
        <begin position="816"/>
        <end position="818"/>
    </location>
</feature>
<feature type="helix" evidence="16">
    <location>
        <begin position="821"/>
        <end position="827"/>
    </location>
</feature>
<reference key="1">
    <citation type="journal article" date="1997" name="Mol. Cell. Biol.">
        <title>Identification and characterization of interactions between the vertebrate polycomb-group protein BMI1 and human homologs of polyhomeotic.</title>
        <authorList>
            <person name="Gunster M.J."/>
            <person name="Satijn D.P.E."/>
            <person name="Hamer K.M."/>
            <person name="den Blaauwen J.L."/>
            <person name="de Bruijn D."/>
            <person name="Alkema M.J."/>
            <person name="van Lohuizen M."/>
            <person name="van Driel R."/>
            <person name="Otte A.P."/>
        </authorList>
    </citation>
    <scope>NUCLEOTIDE SEQUENCE [MRNA]</scope>
    <scope>SUBCELLULAR LOCATION</scope>
    <scope>INTERACTION WITH BMI1 AND PHC2</scope>
</reference>
<reference key="2">
    <citation type="journal article" date="2006" name="Nature">
        <title>The finished DNA sequence of human chromosome 12.</title>
        <authorList>
            <person name="Scherer S.E."/>
            <person name="Muzny D.M."/>
            <person name="Buhay C.J."/>
            <person name="Chen R."/>
            <person name="Cree A."/>
            <person name="Ding Y."/>
            <person name="Dugan-Rocha S."/>
            <person name="Gill R."/>
            <person name="Gunaratne P."/>
            <person name="Harris R.A."/>
            <person name="Hawes A.C."/>
            <person name="Hernandez J."/>
            <person name="Hodgson A.V."/>
            <person name="Hume J."/>
            <person name="Jackson A."/>
            <person name="Khan Z.M."/>
            <person name="Kovar-Smith C."/>
            <person name="Lewis L.R."/>
            <person name="Lozado R.J."/>
            <person name="Metzker M.L."/>
            <person name="Milosavljevic A."/>
            <person name="Miner G.R."/>
            <person name="Montgomery K.T."/>
            <person name="Morgan M.B."/>
            <person name="Nazareth L.V."/>
            <person name="Scott G."/>
            <person name="Sodergren E."/>
            <person name="Song X.-Z."/>
            <person name="Steffen D."/>
            <person name="Lovering R.C."/>
            <person name="Wheeler D.A."/>
            <person name="Worley K.C."/>
            <person name="Yuan Y."/>
            <person name="Zhang Z."/>
            <person name="Adams C.Q."/>
            <person name="Ansari-Lari M.A."/>
            <person name="Ayele M."/>
            <person name="Brown M.J."/>
            <person name="Chen G."/>
            <person name="Chen Z."/>
            <person name="Clerc-Blankenburg K.P."/>
            <person name="Davis C."/>
            <person name="Delgado O."/>
            <person name="Dinh H.H."/>
            <person name="Draper H."/>
            <person name="Gonzalez-Garay M.L."/>
            <person name="Havlak P."/>
            <person name="Jackson L.R."/>
            <person name="Jacob L.S."/>
            <person name="Kelly S.H."/>
            <person name="Li L."/>
            <person name="Li Z."/>
            <person name="Liu J."/>
            <person name="Liu W."/>
            <person name="Lu J."/>
            <person name="Maheshwari M."/>
            <person name="Nguyen B.-V."/>
            <person name="Okwuonu G.O."/>
            <person name="Pasternak S."/>
            <person name="Perez L.M."/>
            <person name="Plopper F.J.H."/>
            <person name="Santibanez J."/>
            <person name="Shen H."/>
            <person name="Tabor P.E."/>
            <person name="Verduzco D."/>
            <person name="Waldron L."/>
            <person name="Wang Q."/>
            <person name="Williams G.A."/>
            <person name="Zhang J."/>
            <person name="Zhou J."/>
            <person name="Allen C.C."/>
            <person name="Amin A.G."/>
            <person name="Anyalebechi V."/>
            <person name="Bailey M."/>
            <person name="Barbaria J.A."/>
            <person name="Bimage K.E."/>
            <person name="Bryant N.P."/>
            <person name="Burch P.E."/>
            <person name="Burkett C.E."/>
            <person name="Burrell K.L."/>
            <person name="Calderon E."/>
            <person name="Cardenas V."/>
            <person name="Carter K."/>
            <person name="Casias K."/>
            <person name="Cavazos I."/>
            <person name="Cavazos S.R."/>
            <person name="Ceasar H."/>
            <person name="Chacko J."/>
            <person name="Chan S.N."/>
            <person name="Chavez D."/>
            <person name="Christopoulos C."/>
            <person name="Chu J."/>
            <person name="Cockrell R."/>
            <person name="Cox C.D."/>
            <person name="Dang M."/>
            <person name="Dathorne S.R."/>
            <person name="David R."/>
            <person name="Davis C.M."/>
            <person name="Davy-Carroll L."/>
            <person name="Deshazo D.R."/>
            <person name="Donlin J.E."/>
            <person name="D'Souza L."/>
            <person name="Eaves K.A."/>
            <person name="Egan A."/>
            <person name="Emery-Cohen A.J."/>
            <person name="Escotto M."/>
            <person name="Flagg N."/>
            <person name="Forbes L.D."/>
            <person name="Gabisi A.M."/>
            <person name="Garza M."/>
            <person name="Hamilton C."/>
            <person name="Henderson N."/>
            <person name="Hernandez O."/>
            <person name="Hines S."/>
            <person name="Hogues M.E."/>
            <person name="Huang M."/>
            <person name="Idlebird D.G."/>
            <person name="Johnson R."/>
            <person name="Jolivet A."/>
            <person name="Jones S."/>
            <person name="Kagan R."/>
            <person name="King L.M."/>
            <person name="Leal B."/>
            <person name="Lebow H."/>
            <person name="Lee S."/>
            <person name="LeVan J.M."/>
            <person name="Lewis L.C."/>
            <person name="London P."/>
            <person name="Lorensuhewa L.M."/>
            <person name="Loulseged H."/>
            <person name="Lovett D.A."/>
            <person name="Lucier A."/>
            <person name="Lucier R.L."/>
            <person name="Ma J."/>
            <person name="Madu R.C."/>
            <person name="Mapua P."/>
            <person name="Martindale A.D."/>
            <person name="Martinez E."/>
            <person name="Massey E."/>
            <person name="Mawhiney S."/>
            <person name="Meador M.G."/>
            <person name="Mendez S."/>
            <person name="Mercado C."/>
            <person name="Mercado I.C."/>
            <person name="Merritt C.E."/>
            <person name="Miner Z.L."/>
            <person name="Minja E."/>
            <person name="Mitchell T."/>
            <person name="Mohabbat F."/>
            <person name="Mohabbat K."/>
            <person name="Montgomery B."/>
            <person name="Moore N."/>
            <person name="Morris S."/>
            <person name="Munidasa M."/>
            <person name="Ngo R.N."/>
            <person name="Nguyen N.B."/>
            <person name="Nickerson E."/>
            <person name="Nwaokelemeh O.O."/>
            <person name="Nwokenkwo S."/>
            <person name="Obregon M."/>
            <person name="Oguh M."/>
            <person name="Oragunye N."/>
            <person name="Oviedo R.J."/>
            <person name="Parish B.J."/>
            <person name="Parker D.N."/>
            <person name="Parrish J."/>
            <person name="Parks K.L."/>
            <person name="Paul H.A."/>
            <person name="Payton B.A."/>
            <person name="Perez A."/>
            <person name="Perrin W."/>
            <person name="Pickens A."/>
            <person name="Primus E.L."/>
            <person name="Pu L.-L."/>
            <person name="Puazo M."/>
            <person name="Quiles M.M."/>
            <person name="Quiroz J.B."/>
            <person name="Rabata D."/>
            <person name="Reeves K."/>
            <person name="Ruiz S.J."/>
            <person name="Shao H."/>
            <person name="Sisson I."/>
            <person name="Sonaike T."/>
            <person name="Sorelle R.P."/>
            <person name="Sutton A.E."/>
            <person name="Svatek A.F."/>
            <person name="Svetz L.A."/>
            <person name="Tamerisa K.S."/>
            <person name="Taylor T.R."/>
            <person name="Teague B."/>
            <person name="Thomas N."/>
            <person name="Thorn R.D."/>
            <person name="Trejos Z.Y."/>
            <person name="Trevino B.K."/>
            <person name="Ukegbu O.N."/>
            <person name="Urban J.B."/>
            <person name="Vasquez L.I."/>
            <person name="Vera V.A."/>
            <person name="Villasana D.M."/>
            <person name="Wang L."/>
            <person name="Ward-Moore S."/>
            <person name="Warren J.T."/>
            <person name="Wei X."/>
            <person name="White F."/>
            <person name="Williamson A.L."/>
            <person name="Wleczyk R."/>
            <person name="Wooden H.S."/>
            <person name="Wooden S.H."/>
            <person name="Yen J."/>
            <person name="Yoon L."/>
            <person name="Yoon V."/>
            <person name="Zorrilla S.E."/>
            <person name="Nelson D."/>
            <person name="Kucherlapati R."/>
            <person name="Weinstock G."/>
            <person name="Gibbs R.A."/>
        </authorList>
    </citation>
    <scope>NUCLEOTIDE SEQUENCE [LARGE SCALE GENOMIC DNA]</scope>
</reference>
<reference key="3">
    <citation type="submission" date="2005-09" db="EMBL/GenBank/DDBJ databases">
        <authorList>
            <person name="Mural R.J."/>
            <person name="Istrail S."/>
            <person name="Sutton G.G."/>
            <person name="Florea L."/>
            <person name="Halpern A.L."/>
            <person name="Mobarry C.M."/>
            <person name="Lippert R."/>
            <person name="Walenz B."/>
            <person name="Shatkay H."/>
            <person name="Dew I."/>
            <person name="Miller J.R."/>
            <person name="Flanigan M.J."/>
            <person name="Edwards N.J."/>
            <person name="Bolanos R."/>
            <person name="Fasulo D."/>
            <person name="Halldorsson B.V."/>
            <person name="Hannenhalli S."/>
            <person name="Turner R."/>
            <person name="Yooseph S."/>
            <person name="Lu F."/>
            <person name="Nusskern D.R."/>
            <person name="Shue B.C."/>
            <person name="Zheng X.H."/>
            <person name="Zhong F."/>
            <person name="Delcher A.L."/>
            <person name="Huson D.H."/>
            <person name="Kravitz S.A."/>
            <person name="Mouchard L."/>
            <person name="Reinert K."/>
            <person name="Remington K.A."/>
            <person name="Clark A.G."/>
            <person name="Waterman M.S."/>
            <person name="Eichler E.E."/>
            <person name="Adams M.D."/>
            <person name="Hunkapiller M.W."/>
            <person name="Myers E.W."/>
            <person name="Venter J.C."/>
        </authorList>
    </citation>
    <scope>NUCLEOTIDE SEQUENCE [LARGE SCALE GENOMIC DNA]</scope>
    <scope>VARIANT ALA-693</scope>
</reference>
<reference key="4">
    <citation type="journal article" date="2004" name="Genome Res.">
        <title>The status, quality, and expansion of the NIH full-length cDNA project: the Mammalian Gene Collection (MGC).</title>
        <authorList>
            <consortium name="The MGC Project Team"/>
        </authorList>
    </citation>
    <scope>NUCLEOTIDE SEQUENCE [LARGE SCALE MRNA] OF 504-1004</scope>
    <scope>VARIANT ALA-693</scope>
    <source>
        <tissue>Lung</tissue>
        <tissue>Lymph</tissue>
    </source>
</reference>
<reference key="5">
    <citation type="journal article" date="1997" name="Mol. Cell. Biol.">
        <title>RING1 is associated with the polycomb group protein complex and acts as a transcriptional repressor.</title>
        <authorList>
            <person name="Satijn D.P.E."/>
            <person name="Gunster M.J."/>
            <person name="van der Vlag J."/>
            <person name="Hamer K.M."/>
            <person name="Schul W."/>
            <person name="Alkema M.J."/>
            <person name="Saurin A.J."/>
            <person name="Freemont P.S."/>
            <person name="van Driel R."/>
            <person name="Otte A.P."/>
        </authorList>
    </citation>
    <scope>INTERACTION WITH PHC2</scope>
</reference>
<reference key="6">
    <citation type="journal article" date="2002" name="Mol. Cell. Biol.">
        <title>The core of the polycomb repressive complex is compositionally and functionally conserved in flies and humans.</title>
        <authorList>
            <person name="Levine S.S."/>
            <person name="Weiss A."/>
            <person name="Erdjument-Bromage H."/>
            <person name="Shao Z."/>
            <person name="Tempst P."/>
            <person name="Kingston R.E."/>
        </authorList>
    </citation>
    <scope>IDENTIFICATION BY MASS SPECTROMETRY</scope>
    <scope>IDENTIFICATION IN A PRC1-LIKE HPRC-H COMPLEX WITH BMI1; CBX2; CBX4; CBX8; PHC2; PHC3; RING1 AND RNF2</scope>
</reference>
<reference key="7">
    <citation type="journal article" date="2009" name="Anal. Chem.">
        <title>Lys-N and trypsin cover complementary parts of the phosphoproteome in a refined SCX-based approach.</title>
        <authorList>
            <person name="Gauci S."/>
            <person name="Helbig A.O."/>
            <person name="Slijper M."/>
            <person name="Krijgsveld J."/>
            <person name="Heck A.J."/>
            <person name="Mohammed S."/>
        </authorList>
    </citation>
    <scope>IDENTIFICATION BY MASS SPECTROMETRY [LARGE SCALE ANALYSIS]</scope>
</reference>
<reference key="8">
    <citation type="journal article" date="2009" name="PLoS ONE">
        <title>Several distinct polycomb complexes regulate and co-localize on the INK4a tumor suppressor locus.</title>
        <authorList>
            <person name="Maertens G.N."/>
            <person name="El Messaoudi-Aubert S."/>
            <person name="Racek T."/>
            <person name="Stock J.K."/>
            <person name="Nicholls J."/>
            <person name="Rodriguez-Niedenfuhr M."/>
            <person name="Gil J."/>
            <person name="Peters G."/>
        </authorList>
    </citation>
    <scope>IDENTIFICATION IN A PRC1-LIKE COMPLEX</scope>
</reference>
<reference key="9">
    <citation type="journal article" date="2009" name="Sci. Signal.">
        <title>Quantitative phosphoproteomic analysis of T cell receptor signaling reveals system-wide modulation of protein-protein interactions.</title>
        <authorList>
            <person name="Mayya V."/>
            <person name="Lundgren D.H."/>
            <person name="Hwang S.-I."/>
            <person name="Rezaul K."/>
            <person name="Wu L."/>
            <person name="Eng J.K."/>
            <person name="Rodionov V."/>
            <person name="Han D.K."/>
        </authorList>
    </citation>
    <scope>PHOSPHORYLATION [LARGE SCALE ANALYSIS] AT SER-898 AND THR-922</scope>
    <scope>IDENTIFICATION BY MASS SPECTROMETRY [LARGE SCALE ANALYSIS]</scope>
    <source>
        <tissue>Leukemic T-cell</tissue>
    </source>
</reference>
<reference key="10">
    <citation type="journal article" date="2011" name="Mol. Cell. Proteomics">
        <title>Interaction proteomics analysis of polycomb proteins defines distinct PRC1 Complexes in mammalian cells.</title>
        <authorList>
            <person name="Vandamme J."/>
            <person name="Volkel P."/>
            <person name="Rosnoblet C."/>
            <person name="Le Faou P."/>
            <person name="Angrand P.O."/>
        </authorList>
    </citation>
    <scope>IDENTIFICATION IN A PRC1-LIKE COMPLEX</scope>
    <scope>SUBCELLULAR LOCATION</scope>
</reference>
<reference key="11">
    <citation type="journal article" date="2011" name="Sci. Signal.">
        <title>System-wide temporal characterization of the proteome and phosphoproteome of human embryonic stem cell differentiation.</title>
        <authorList>
            <person name="Rigbolt K.T."/>
            <person name="Prokhorova T.A."/>
            <person name="Akimov V."/>
            <person name="Henningsen J."/>
            <person name="Johansen P.T."/>
            <person name="Kratchmarova I."/>
            <person name="Kassem M."/>
            <person name="Mann M."/>
            <person name="Olsen J.V."/>
            <person name="Blagoev B."/>
        </authorList>
    </citation>
    <scope>PHOSPHORYLATION [LARGE SCALE ANALYSIS] AT SER-645</scope>
    <scope>IDENTIFICATION BY MASS SPECTROMETRY [LARGE SCALE ANALYSIS]</scope>
</reference>
<reference key="12">
    <citation type="journal article" date="2013" name="Hum. Mol. Genet.">
        <title>Mutation in PHC1 implicates chromatin remodeling in primary microcephaly pathogenesis.</title>
        <authorList>
            <person name="Awad S."/>
            <person name="Al-Dosari M.S."/>
            <person name="Al-Yacoub N."/>
            <person name="Colak D."/>
            <person name="Salih M.A."/>
            <person name="Alkuraya F.S."/>
            <person name="Poizat C."/>
        </authorList>
    </citation>
    <scope>FUNCTION</scope>
    <scope>VARIANT MCPH11 PHE-992</scope>
</reference>
<reference key="13">
    <citation type="journal article" date="2017" name="Nat. Struct. Mol. Biol.">
        <title>Site-specific mapping of the human SUMO proteome reveals co-modification with phosphorylation.</title>
        <authorList>
            <person name="Hendriks I.A."/>
            <person name="Lyon D."/>
            <person name="Young C."/>
            <person name="Jensen L.J."/>
            <person name="Vertegaal A.C."/>
            <person name="Nielsen M.L."/>
        </authorList>
    </citation>
    <scope>SUMOYLATION [LARGE SCALE ANALYSIS] AT LYS-763</scope>
    <scope>IDENTIFICATION BY MASS SPECTROMETRY [LARGE SCALE ANALYSIS]</scope>
</reference>
<sequence>METESEQNSNSTNGSSSSGGSSRPQIAQMSLYERQAVQALQALQRQPNAAQYFHQFMLQQQLSNAQLHSLAAVQQATIAASRQASSPNTSTTQQQTTTTQASINLATTSAAQLISRSQSVSSPSATTLTQSVLLGNTTSPPLNQSQAQMYLRPQLGNLLQVNRTLGRNVPLASQLILMPNGAVAAVQQEVPSAQSPGVHADADQVQNLAVRNQQASAQGPQMQGSTQKAIPPGASPVSSLSQASSQALAVAQASSGATNQSLNLSQAGGGSGNSIPGSMGPGGGGQAHGGLGQLPSSGMGGGSCPRKGTGVVQPLPAAQTVTVSQGSQTEAESAAAKKAEADGSGQQNVGMNLTRTATPAPSQTLISSATYTQIQPHSLIQQQQQIHLQQKQVVIQQQIAIHHQQQFQHRQSQLLHTATHLQLAQQQQQQQQQQQQQQQPQATTLTAPQPPQVPPTQQVPPSQSQQQAQTLVVQPMLQSSPLSLPPDAAPKPPIPIQSKPPVAPIKPPQLGAAKMSAAQQPPPHIPVQVVGTRQPGTAQAQALGLAQLAAAVPTSRGMPGTVQSGQAHLASSPPSSQAPGALQECPPTLAPGMTLAPVQGTAHVVKGGATTSSPVVAQVPAAFYMQSVHLPGKPQTLAVKRKADSEEERDDVSTLGSMLPAKASPVAESPKVMDEKSSLGEKAESVANVNANTPSSELVALTPAPSVPPPTLAMVSRQMGDSKPPQAIVKPQILTHIIEGFVIQEGAEPFPVGCSQLLKESEKPLQTGLPTGLTENQSGGPLGVDSPSAELDKKANLLKCEYCGKYAPAEQFRGSKRFCSMTCAKRYNVSCSHQFRLKRKKMKEFQEANYARVRRRGPRRSSSDIARAKIQGKCHRGQEDSSRGSDNSSYDEALSPTSPGPLSVRAGHGERDLGNPNTAPPTPELHGINPVFLSSNPSRWSVEEVYEFIASLQGCQEIAEEFRSQEIDGQALLLLKEEHLMSAMNIKLGPALKICAKINVLKET</sequence>
<comment type="function">
    <text evidence="9">Component of a Polycomb group (PcG) multiprotein PRC1-like complex, a complex class required to maintain the transcriptionally repressive state of many genes, including Hox genes, throughout development. PcG PRC1 complex acts via chromatin remodeling and modification of histones; it mediates monoubiquitination of histone H2A 'Lys-119', rendering chromatin heritably changed in its expressibility. Required for proper control of cellular levels of GMNN expression.</text>
</comment>
<comment type="subunit">
    <text evidence="1 5 7 8">Homodimer. Component of a PRC1-like complex (PubMed:12167701, PubMed:19636380, PubMed:21282530). Interacts with RNF2 and CBX7 (By similarity). Interacts with PHC2, PHC2 and BMI1 (By similarity).</text>
</comment>
<comment type="interaction">
    <interactant intactId="EBI-725403">
        <id>P78364</id>
    </interactant>
    <interactant intactId="EBI-2341576">
        <id>P35226</id>
        <label>BMI1</label>
    </interactant>
    <organismsDiffer>false</organismsDiffer>
    <experiments>8</experiments>
</comment>
<comment type="interaction">
    <interactant intactId="EBI-725403">
        <id>P78364</id>
    </interactant>
    <interactant intactId="EBI-8468186">
        <id>Q8IZU1</id>
        <label>FAM9A</label>
    </interactant>
    <organismsDiffer>false</organismsDiffer>
    <experiments>3</experiments>
</comment>
<comment type="interaction">
    <interactant intactId="EBI-725403">
        <id>P78364</id>
    </interactant>
    <interactant intactId="EBI-2129767">
        <id>P35227</id>
        <label>PCGF2</label>
    </interactant>
    <organismsDiffer>false</organismsDiffer>
    <experiments>13</experiments>
</comment>
<comment type="interaction">
    <interactant intactId="EBI-725403">
        <id>P78364</id>
    </interactant>
    <interactant intactId="EBI-12818023">
        <id>Q3KNV8-2</id>
        <label>PCGF3</label>
    </interactant>
    <organismsDiffer>false</organismsDiffer>
    <experiments>5</experiments>
</comment>
<comment type="interaction">
    <interactant intactId="EBI-725403">
        <id>P78364</id>
    </interactant>
    <interactant intactId="EBI-713786">
        <id>Q8IXK0</id>
        <label>PHC2</label>
    </interactant>
    <organismsDiffer>false</organismsDiffer>
    <experiments>3</experiments>
</comment>
<comment type="interaction">
    <interactant intactId="EBI-725403">
        <id>P78364</id>
    </interactant>
    <interactant intactId="EBI-2340927">
        <id>P78317</id>
        <label>RNF4</label>
    </interactant>
    <organismsDiffer>false</organismsDiffer>
    <experiments>5</experiments>
</comment>
<comment type="interaction">
    <interactant intactId="EBI-725403">
        <id>P78364</id>
    </interactant>
    <interactant intactId="EBI-742426">
        <id>Q9H190</id>
        <label>SDCBP2</label>
    </interactant>
    <organismsDiffer>false</organismsDiffer>
    <experiments>3</experiments>
</comment>
<comment type="interaction">
    <interactant intactId="EBI-725403">
        <id>P78364</id>
    </interactant>
    <interactant intactId="EBI-12025260">
        <id>Q5VUG0</id>
        <label>SFMBT2</label>
    </interactant>
    <organismsDiffer>false</organismsDiffer>
    <experiments>5</experiments>
</comment>
<comment type="subcellular location">
    <subcellularLocation>
        <location evidence="8 10">Nucleus</location>
    </subcellularLocation>
</comment>
<comment type="disease" evidence="9">
    <disease id="DI-03890">
        <name>Microcephaly 11, primary, autosomal recessive</name>
        <acronym>MCPH11</acronym>
        <description>A form of microcephaly, a disease defined as a head circumference more than 3 standard deviations below the age-related mean. Brain weight is markedly reduced and the cerebral cortex is disproportionately small.</description>
        <dbReference type="MIM" id="615414"/>
    </disease>
    <text>The disease is caused by variants affecting the gene represented in this entry.</text>
</comment>
<comment type="miscellaneous">
    <text>The hPRC-H complex purification reported by PubMed:12167701 probably presents a mixture of different PRC1-like complexes.</text>
</comment>
<comment type="sequence caution" evidence="12">
    <conflict type="erroneous initiation">
        <sequence resource="EMBL-CDS" id="AAH17748"/>
    </conflict>
    <text>Truncated N-terminus.</text>
</comment>
<keyword id="KW-0002">3D-structure</keyword>
<keyword id="KW-0217">Developmental protein</keyword>
<keyword id="KW-0225">Disease variant</keyword>
<keyword id="KW-0238">DNA-binding</keyword>
<keyword id="KW-1017">Isopeptide bond</keyword>
<keyword id="KW-0479">Metal-binding</keyword>
<keyword id="KW-0539">Nucleus</keyword>
<keyword id="KW-0597">Phosphoprotein</keyword>
<keyword id="KW-0905">Primary microcephaly</keyword>
<keyword id="KW-1267">Proteomics identification</keyword>
<keyword id="KW-1185">Reference proteome</keyword>
<keyword id="KW-0832">Ubl conjugation</keyword>
<keyword id="KW-0862">Zinc</keyword>
<keyword id="KW-0863">Zinc-finger</keyword>
<proteinExistence type="evidence at protein level"/>
<dbReference type="EMBL" id="U89277">
    <property type="protein sequence ID" value="AAC51169.1"/>
    <property type="molecule type" value="mRNA"/>
</dbReference>
<dbReference type="EMBL" id="AC006581">
    <property type="status" value="NOT_ANNOTATED_CDS"/>
    <property type="molecule type" value="Genomic_DNA"/>
</dbReference>
<dbReference type="EMBL" id="CH471116">
    <property type="protein sequence ID" value="EAW88600.1"/>
    <property type="molecule type" value="Genomic_DNA"/>
</dbReference>
<dbReference type="EMBL" id="CH471116">
    <property type="protein sequence ID" value="EAW88601.1"/>
    <property type="molecule type" value="Genomic_DNA"/>
</dbReference>
<dbReference type="EMBL" id="BC002871">
    <property type="protein sequence ID" value="AAH02871.2"/>
    <property type="molecule type" value="mRNA"/>
</dbReference>
<dbReference type="EMBL" id="BC017748">
    <property type="protein sequence ID" value="AAH17748.1"/>
    <property type="status" value="ALT_INIT"/>
    <property type="molecule type" value="mRNA"/>
</dbReference>
<dbReference type="CCDS" id="CCDS8597.1"/>
<dbReference type="RefSeq" id="NP_001400667.1">
    <property type="nucleotide sequence ID" value="NM_001413738.1"/>
</dbReference>
<dbReference type="RefSeq" id="NP_004417.2">
    <property type="nucleotide sequence ID" value="NM_004426.3"/>
</dbReference>
<dbReference type="PDB" id="2L8E">
    <property type="method" value="NMR"/>
    <property type="chains" value="A=783-828"/>
</dbReference>
<dbReference type="PDBsum" id="2L8E"/>
<dbReference type="SMR" id="P78364"/>
<dbReference type="BioGRID" id="108233">
    <property type="interactions" value="82"/>
</dbReference>
<dbReference type="ComplexPortal" id="CPX-2594">
    <property type="entry name" value="Polycomb repressive complex 1, RING1-PCGF2-CBX4-PHC1 variant"/>
</dbReference>
<dbReference type="ComplexPortal" id="CPX-2600">
    <property type="entry name" value="Polycomb repressive complex 1, RING1-PCGF2-CBX7-PHC1 variant"/>
</dbReference>
<dbReference type="ComplexPortal" id="CPX-2605">
    <property type="entry name" value="Polycomb repressive complex 1, RING1-PCGF2-CBX2-PHC1 variant"/>
</dbReference>
<dbReference type="ComplexPortal" id="CPX-2616">
    <property type="entry name" value="Polycomb repressive complex 1, RING1-PCGF2-CBX6-PHC1 variant"/>
</dbReference>
<dbReference type="ComplexPortal" id="CPX-2621">
    <property type="entry name" value="Polycomb repressive complex 1, RING1-PCGF2-CBX8-PHC1 variant"/>
</dbReference>
<dbReference type="ComplexPortal" id="CPX-7501">
    <property type="entry name" value="Polycomb repressive complex 1, RING1-PCGF4-CBX2-PHC1 variant"/>
</dbReference>
<dbReference type="ComplexPortal" id="CPX-7505">
    <property type="entry name" value="Polycomb repressive complex 1, RING1-PCGF4-CBX4-PHC1 variant"/>
</dbReference>
<dbReference type="ComplexPortal" id="CPX-7509">
    <property type="entry name" value="Polycomb repressive complex 1, RING1-PCGF4-CBX6-PHC1 variant"/>
</dbReference>
<dbReference type="ComplexPortal" id="CPX-7513">
    <property type="entry name" value="Polycomb repressive complex 1, RING1-PCGF4-CBX7-PHC1 variant"/>
</dbReference>
<dbReference type="ComplexPortal" id="CPX-7516">
    <property type="entry name" value="Polycomb repressive complex 1, RING1-PCGF4-CBX8-PHC1 variant"/>
</dbReference>
<dbReference type="ComplexPortal" id="CPX-7519">
    <property type="entry name" value="Polycomb repressive complex 1, RING2-PCGF2-CBX2-PHC1 variant"/>
</dbReference>
<dbReference type="ComplexPortal" id="CPX-7524">
    <property type="entry name" value="Polycomb repressive complex 1, RING2-PCGF2-CBX4-PHC1 variant"/>
</dbReference>
<dbReference type="ComplexPortal" id="CPX-7527">
    <property type="entry name" value="Polycomb repressive complex 1, RING2-PCGF2-CBX6-PHC1 variant"/>
</dbReference>
<dbReference type="ComplexPortal" id="CPX-7530">
    <property type="entry name" value="Polycomb repressive complex 1, RING2-PCGF2-CBX7-PHC1 variant"/>
</dbReference>
<dbReference type="ComplexPortal" id="CPX-7533">
    <property type="entry name" value="Polycomb repressive complex 1, RING2-PCGF2-CBX8-PHC1 variant"/>
</dbReference>
<dbReference type="ComplexPortal" id="CPX-7541">
    <property type="entry name" value="Polycomb repressive complex 1, RING2-PCGF4-CBX2-PHC1 variant"/>
</dbReference>
<dbReference type="ComplexPortal" id="CPX-7545">
    <property type="entry name" value="Polycomb repressive complex 1, RING2-PCGF4-CBX4-PHC1 variant"/>
</dbReference>
<dbReference type="ComplexPortal" id="CPX-7548">
    <property type="entry name" value="Polycomb repressive complex 1, RING2-PCGF4-CBX6-PHC1 variant"/>
</dbReference>
<dbReference type="ComplexPortal" id="CPX-7551">
    <property type="entry name" value="Polycomb repressive complex 1, RING2-PCGF4-CBX7-PHC1 variant"/>
</dbReference>
<dbReference type="ComplexPortal" id="CPX-7554">
    <property type="entry name" value="Polycomb repressive complex 1, RING2-PCGF4-CBX8-PHC1 variant"/>
</dbReference>
<dbReference type="CORUM" id="P78364"/>
<dbReference type="DIP" id="DIP-44567N"/>
<dbReference type="FunCoup" id="P78364">
    <property type="interactions" value="1860"/>
</dbReference>
<dbReference type="IntAct" id="P78364">
    <property type="interactions" value="44"/>
</dbReference>
<dbReference type="MINT" id="P78364"/>
<dbReference type="STRING" id="9606.ENSP00000437659"/>
<dbReference type="GlyCosmos" id="P78364">
    <property type="glycosylation" value="1 site, 1 glycan"/>
</dbReference>
<dbReference type="GlyGen" id="P78364">
    <property type="glycosylation" value="6 sites, 1 O-linked glycan (5 sites)"/>
</dbReference>
<dbReference type="iPTMnet" id="P78364"/>
<dbReference type="PhosphoSitePlus" id="P78364"/>
<dbReference type="BioMuta" id="PHC1"/>
<dbReference type="DMDM" id="224471881"/>
<dbReference type="jPOST" id="P78364"/>
<dbReference type="MassIVE" id="P78364"/>
<dbReference type="PaxDb" id="9606-ENSP00000440674"/>
<dbReference type="PeptideAtlas" id="P78364"/>
<dbReference type="ProteomicsDB" id="57594"/>
<dbReference type="Pumba" id="P78364"/>
<dbReference type="Antibodypedia" id="1884">
    <property type="antibodies" value="199 antibodies from 28 providers"/>
</dbReference>
<dbReference type="DNASU" id="1911"/>
<dbReference type="Ensembl" id="ENST00000543824.5">
    <property type="protein sequence ID" value="ENSP00000440674.1"/>
    <property type="gene ID" value="ENSG00000111752.11"/>
</dbReference>
<dbReference type="Ensembl" id="ENST00000544916.6">
    <property type="protein sequence ID" value="ENSP00000437659.1"/>
    <property type="gene ID" value="ENSG00000111752.11"/>
</dbReference>
<dbReference type="GeneID" id="1911"/>
<dbReference type="KEGG" id="hsa:1911"/>
<dbReference type="MANE-Select" id="ENST00000544916.6">
    <property type="protein sequence ID" value="ENSP00000437659.1"/>
    <property type="RefSeq nucleotide sequence ID" value="NM_004426.3"/>
    <property type="RefSeq protein sequence ID" value="NP_004417.2"/>
</dbReference>
<dbReference type="UCSC" id="uc001qvd.4">
    <property type="organism name" value="human"/>
</dbReference>
<dbReference type="AGR" id="HGNC:3182"/>
<dbReference type="CTD" id="1911"/>
<dbReference type="DisGeNET" id="1911"/>
<dbReference type="GeneCards" id="PHC1"/>
<dbReference type="HGNC" id="HGNC:3182">
    <property type="gene designation" value="PHC1"/>
</dbReference>
<dbReference type="HPA" id="ENSG00000111752">
    <property type="expression patterns" value="Low tissue specificity"/>
</dbReference>
<dbReference type="MalaCards" id="PHC1"/>
<dbReference type="MIM" id="602978">
    <property type="type" value="gene"/>
</dbReference>
<dbReference type="MIM" id="615414">
    <property type="type" value="phenotype"/>
</dbReference>
<dbReference type="neXtProt" id="NX_P78364"/>
<dbReference type="OpenTargets" id="ENSG00000111752"/>
<dbReference type="Orphanet" id="2512">
    <property type="disease" value="Autosomal recessive primary microcephaly"/>
</dbReference>
<dbReference type="PharmGKB" id="PA27619"/>
<dbReference type="VEuPathDB" id="HostDB:ENSG00000111752"/>
<dbReference type="eggNOG" id="ENOG502QUTP">
    <property type="taxonomic scope" value="Eukaryota"/>
</dbReference>
<dbReference type="GeneTree" id="ENSGT00940000156612"/>
<dbReference type="HOGENOM" id="CLU_012048_1_0_1"/>
<dbReference type="InParanoid" id="P78364"/>
<dbReference type="OMA" id="QHTNEIN"/>
<dbReference type="OrthoDB" id="2390104at2759"/>
<dbReference type="PAN-GO" id="P78364">
    <property type="GO annotations" value="5 GO annotations based on evolutionary models"/>
</dbReference>
<dbReference type="PhylomeDB" id="P78364"/>
<dbReference type="TreeFam" id="TF331299"/>
<dbReference type="PathwayCommons" id="P78364"/>
<dbReference type="Reactome" id="R-HSA-2559580">
    <property type="pathway name" value="Oxidative Stress Induced Senescence"/>
</dbReference>
<dbReference type="Reactome" id="R-HSA-3108214">
    <property type="pathway name" value="SUMOylation of DNA damage response and repair proteins"/>
</dbReference>
<dbReference type="Reactome" id="R-HSA-3899300">
    <property type="pathway name" value="SUMOylation of transcription cofactors"/>
</dbReference>
<dbReference type="Reactome" id="R-HSA-4551638">
    <property type="pathway name" value="SUMOylation of chromatin organization proteins"/>
</dbReference>
<dbReference type="Reactome" id="R-HSA-4570464">
    <property type="pathway name" value="SUMOylation of RNA binding proteins"/>
</dbReference>
<dbReference type="Reactome" id="R-HSA-4655427">
    <property type="pathway name" value="SUMOylation of DNA methylation proteins"/>
</dbReference>
<dbReference type="Reactome" id="R-HSA-8939243">
    <property type="pathway name" value="RUNX1 interacts with co-factors whose precise effect on RUNX1 targets is not known"/>
</dbReference>
<dbReference type="Reactome" id="R-HSA-8943724">
    <property type="pathway name" value="Regulation of PTEN gene transcription"/>
</dbReference>
<dbReference type="Reactome" id="R-HSA-8953750">
    <property type="pathway name" value="Transcriptional Regulation by E2F6"/>
</dbReference>
<dbReference type="SignaLink" id="P78364"/>
<dbReference type="SIGNOR" id="P78364"/>
<dbReference type="BioGRID-ORCS" id="1911">
    <property type="hits" value="38 hits in 1156 CRISPR screens"/>
</dbReference>
<dbReference type="ChiTaRS" id="PHC1">
    <property type="organism name" value="human"/>
</dbReference>
<dbReference type="EvolutionaryTrace" id="P78364"/>
<dbReference type="GeneWiki" id="PHC1"/>
<dbReference type="GenomeRNAi" id="1911"/>
<dbReference type="Pharos" id="P78364">
    <property type="development level" value="Tbio"/>
</dbReference>
<dbReference type="PRO" id="PR:P78364"/>
<dbReference type="Proteomes" id="UP000005640">
    <property type="component" value="Chromosome 12"/>
</dbReference>
<dbReference type="RNAct" id="P78364">
    <property type="molecule type" value="protein"/>
</dbReference>
<dbReference type="Bgee" id="ENSG00000111752">
    <property type="expression patterns" value="Expressed in right uterine tube and 180 other cell types or tissues"/>
</dbReference>
<dbReference type="ExpressionAtlas" id="P78364">
    <property type="expression patterns" value="baseline and differential"/>
</dbReference>
<dbReference type="GO" id="GO:0016604">
    <property type="term" value="C:nuclear body"/>
    <property type="evidence" value="ECO:0007669"/>
    <property type="project" value="Ensembl"/>
</dbReference>
<dbReference type="GO" id="GO:0005654">
    <property type="term" value="C:nucleoplasm"/>
    <property type="evidence" value="ECO:0000314"/>
    <property type="project" value="HPA"/>
</dbReference>
<dbReference type="GO" id="GO:0005634">
    <property type="term" value="C:nucleus"/>
    <property type="evidence" value="ECO:0000314"/>
    <property type="project" value="UniProtKB"/>
</dbReference>
<dbReference type="GO" id="GO:0031519">
    <property type="term" value="C:PcG protein complex"/>
    <property type="evidence" value="ECO:0000314"/>
    <property type="project" value="UniProtKB"/>
</dbReference>
<dbReference type="GO" id="GO:0035102">
    <property type="term" value="C:PRC1 complex"/>
    <property type="evidence" value="ECO:0000314"/>
    <property type="project" value="UniProtKB"/>
</dbReference>
<dbReference type="GO" id="GO:0001739">
    <property type="term" value="C:sex chromatin"/>
    <property type="evidence" value="ECO:0007669"/>
    <property type="project" value="Ensembl"/>
</dbReference>
<dbReference type="GO" id="GO:0003682">
    <property type="term" value="F:chromatin binding"/>
    <property type="evidence" value="ECO:0000318"/>
    <property type="project" value="GO_Central"/>
</dbReference>
<dbReference type="GO" id="GO:0003677">
    <property type="term" value="F:DNA binding"/>
    <property type="evidence" value="ECO:0007669"/>
    <property type="project" value="UniProtKB-KW"/>
</dbReference>
<dbReference type="GO" id="GO:0042393">
    <property type="term" value="F:histone binding"/>
    <property type="evidence" value="ECO:0000318"/>
    <property type="project" value="GO_Central"/>
</dbReference>
<dbReference type="GO" id="GO:0008270">
    <property type="term" value="F:zinc ion binding"/>
    <property type="evidence" value="ECO:0007669"/>
    <property type="project" value="UniProtKB-KW"/>
</dbReference>
<dbReference type="GO" id="GO:1990830">
    <property type="term" value="P:cellular response to leukemia inhibitory factor"/>
    <property type="evidence" value="ECO:0007669"/>
    <property type="project" value="Ensembl"/>
</dbReference>
<dbReference type="GO" id="GO:0071300">
    <property type="term" value="P:cellular response to retinoic acid"/>
    <property type="evidence" value="ECO:0007669"/>
    <property type="project" value="Ensembl"/>
</dbReference>
<dbReference type="GO" id="GO:0006338">
    <property type="term" value="P:chromatin remodeling"/>
    <property type="evidence" value="ECO:0000315"/>
    <property type="project" value="UniProtKB"/>
</dbReference>
<dbReference type="GO" id="GO:0045892">
    <property type="term" value="P:negative regulation of DNA-templated transcription"/>
    <property type="evidence" value="ECO:0000318"/>
    <property type="project" value="GO_Central"/>
</dbReference>
<dbReference type="CDD" id="cd09577">
    <property type="entry name" value="SAM_Ph1_2_3"/>
    <property type="match status" value="1"/>
</dbReference>
<dbReference type="FunFam" id="1.10.150.50:FF:000011">
    <property type="entry name" value="Polyhomeotic-like protein 2 isoform 1"/>
    <property type="match status" value="1"/>
</dbReference>
<dbReference type="FunFam" id="3.30.60.160:FF:000002">
    <property type="entry name" value="Polyhomeotic-like protein 2 isoform 1"/>
    <property type="match status" value="1"/>
</dbReference>
<dbReference type="Gene3D" id="3.30.60.160">
    <property type="match status" value="1"/>
</dbReference>
<dbReference type="Gene3D" id="1.10.150.50">
    <property type="entry name" value="Transcription Factor, Ets-1"/>
    <property type="match status" value="1"/>
</dbReference>
<dbReference type="InterPro" id="IPR050548">
    <property type="entry name" value="PcG_chromatin_remod_factors"/>
</dbReference>
<dbReference type="InterPro" id="IPR001660">
    <property type="entry name" value="SAM"/>
</dbReference>
<dbReference type="InterPro" id="IPR013761">
    <property type="entry name" value="SAM/pointed_sf"/>
</dbReference>
<dbReference type="InterPro" id="IPR012313">
    <property type="entry name" value="Znf_FCS"/>
</dbReference>
<dbReference type="InterPro" id="IPR038603">
    <property type="entry name" value="Znf_FCS_sf"/>
</dbReference>
<dbReference type="PANTHER" id="PTHR12247">
    <property type="entry name" value="POLYCOMB GROUP PROTEIN"/>
    <property type="match status" value="1"/>
</dbReference>
<dbReference type="PANTHER" id="PTHR12247:SF20">
    <property type="entry name" value="POLYHOMEOTIC-LIKE PROTEIN 1"/>
    <property type="match status" value="1"/>
</dbReference>
<dbReference type="Pfam" id="PF16616">
    <property type="entry name" value="PHC2_SAM_assoc"/>
    <property type="match status" value="1"/>
</dbReference>
<dbReference type="Pfam" id="PF00536">
    <property type="entry name" value="SAM_1"/>
    <property type="match status" value="1"/>
</dbReference>
<dbReference type="Pfam" id="PF21319">
    <property type="entry name" value="zf-FCS_1"/>
    <property type="match status" value="1"/>
</dbReference>
<dbReference type="SMART" id="SM00454">
    <property type="entry name" value="SAM"/>
    <property type="match status" value="1"/>
</dbReference>
<dbReference type="SUPFAM" id="SSF47769">
    <property type="entry name" value="SAM/Pointed domain"/>
    <property type="match status" value="1"/>
</dbReference>
<dbReference type="PROSITE" id="PS50105">
    <property type="entry name" value="SAM_DOMAIN"/>
    <property type="match status" value="1"/>
</dbReference>
<dbReference type="PROSITE" id="PS51024">
    <property type="entry name" value="ZF_FCS"/>
    <property type="match status" value="1"/>
</dbReference>
<organism>
    <name type="scientific">Homo sapiens</name>
    <name type="common">Human</name>
    <dbReference type="NCBI Taxonomy" id="9606"/>
    <lineage>
        <taxon>Eukaryota</taxon>
        <taxon>Metazoa</taxon>
        <taxon>Chordata</taxon>
        <taxon>Craniata</taxon>
        <taxon>Vertebrata</taxon>
        <taxon>Euteleostomi</taxon>
        <taxon>Mammalia</taxon>
        <taxon>Eutheria</taxon>
        <taxon>Euarchontoglires</taxon>
        <taxon>Primates</taxon>
        <taxon>Haplorrhini</taxon>
        <taxon>Catarrhini</taxon>
        <taxon>Hominidae</taxon>
        <taxon>Homo</taxon>
    </lineage>
</organism>
<protein>
    <recommendedName>
        <fullName>Polyhomeotic-like protein 1</fullName>
        <shortName>hPH1</shortName>
    </recommendedName>
    <alternativeName>
        <fullName>Early development regulatory protein 1</fullName>
    </alternativeName>
</protein>
<evidence type="ECO:0000250" key="1">
    <source>
        <dbReference type="UniProtKB" id="Q64028"/>
    </source>
</evidence>
<evidence type="ECO:0000255" key="2">
    <source>
        <dbReference type="PROSITE-ProRule" id="PRU00184"/>
    </source>
</evidence>
<evidence type="ECO:0000255" key="3">
    <source>
        <dbReference type="PROSITE-ProRule" id="PRU00367"/>
    </source>
</evidence>
<evidence type="ECO:0000256" key="4">
    <source>
        <dbReference type="SAM" id="MobiDB-lite"/>
    </source>
</evidence>
<evidence type="ECO:0000269" key="5">
    <source>
    </source>
</evidence>
<evidence type="ECO:0000269" key="6">
    <source>
    </source>
</evidence>
<evidence type="ECO:0000269" key="7">
    <source>
    </source>
</evidence>
<evidence type="ECO:0000269" key="8">
    <source>
    </source>
</evidence>
<evidence type="ECO:0000269" key="9">
    <source>
    </source>
</evidence>
<evidence type="ECO:0000269" key="10">
    <source>
    </source>
</evidence>
<evidence type="ECO:0000269" key="11">
    <source ref="3"/>
</evidence>
<evidence type="ECO:0000305" key="12"/>
<evidence type="ECO:0007744" key="13">
    <source>
    </source>
</evidence>
<evidence type="ECO:0007744" key="14">
    <source>
    </source>
</evidence>
<evidence type="ECO:0007744" key="15">
    <source>
    </source>
</evidence>
<evidence type="ECO:0007829" key="16">
    <source>
        <dbReference type="PDB" id="2L8E"/>
    </source>
</evidence>